<gene>
    <name evidence="11 12" type="primary">Madm</name>
    <name type="ORF">CG1098</name>
</gene>
<sequence>MSNSQANAGISGSTVADEPIQHHPSLAAGPVSASCPAATPPSQSTQQPPPHIVSASTADAGSSAAVGVGVVAGSEGVNLDSSPRESGDDSEDESEILEESPCGRWLKRREEVDQRDVPGIDCVHLAMDTEEGVEVVWNEVQYASLQELKSQEEKMRQVFDNLLQLDHQNIVKFHRYWTDTQQAERPRVVFITEYMSSGSLKQFLKRTKRNAKRLPLESWRRWCTQILSALSYLHSCSPPIIHGNLTCDSIFIQHNGLVKIGSVVPDAVHYSVRRGRERERERERGAHYFQAPEYGAADQLTAALDIYAFGMCALEMAALEIQPSNSESTAINEETIQRTIFSLENDLQRDLIRKCLNPQPQDRPSANDLLFHPLLFEVHSLKLLTAHCLVFSPANRTMFSETAFDGLMQRYYQPDVVMAQLRLAGGQERQYRLADVSGADKLEKFVEDVKYGVYPLITYSGKKPPNFRSRAASPERADSVKSATPEPVDTESRRIVNMMCSVKIKEDSNDITMTILLRMDDKMNRQLTCQVNENDTAADLTSELVRLGFVHLDDQDKIQVLLEETLKAGVMSDGAGAESSGAGVTTTATMAALEQLERNWSISSDADKQGTAVMYVPQEQQNADGDVDVEHSGTTSN</sequence>
<protein>
    <recommendedName>
        <fullName>Nuclear receptor-binding protein homolog</fullName>
    </recommendedName>
    <alternativeName>
        <fullName>MLF1-adaptor molecule</fullName>
    </alternativeName>
</protein>
<keyword id="KW-0963">Cytoplasm</keyword>
<keyword id="KW-0597">Phosphoprotein</keyword>
<keyword id="KW-1185">Reference proteome</keyword>
<comment type="function">
    <text evidence="1">May play a role in subcellular trafficking between the endoplasmic reticulum and Golgi apparatus.</text>
</comment>
<comment type="subcellular location">
    <subcellularLocation>
        <location evidence="2">Cytoplasm</location>
        <location evidence="2">Cell cortex</location>
    </subcellularLocation>
</comment>
<comment type="domain">
    <text evidence="3">The protein kinase domain is predicted to be catalytically inactive.</text>
</comment>
<comment type="similarity">
    <text evidence="4">Belongs to the protein kinase superfamily. Ser/Thr protein kinase family.</text>
</comment>
<evidence type="ECO:0000250" key="1"/>
<evidence type="ECO:0000250" key="2">
    <source>
        <dbReference type="UniProtKB" id="Q9UHY1"/>
    </source>
</evidence>
<evidence type="ECO:0000255" key="3"/>
<evidence type="ECO:0000255" key="4">
    <source>
        <dbReference type="PROSITE-ProRule" id="PRU00159"/>
    </source>
</evidence>
<evidence type="ECO:0000256" key="5">
    <source>
        <dbReference type="SAM" id="MobiDB-lite"/>
    </source>
</evidence>
<evidence type="ECO:0000269" key="6">
    <source>
    </source>
</evidence>
<evidence type="ECO:0000269" key="7">
    <source>
    </source>
</evidence>
<evidence type="ECO:0000269" key="8">
    <source>
    </source>
</evidence>
<evidence type="ECO:0000305" key="9"/>
<evidence type="ECO:0000312" key="10">
    <source>
        <dbReference type="EMBL" id="AAD38665.1"/>
    </source>
</evidence>
<evidence type="ECO:0000312" key="11">
    <source>
        <dbReference type="EMBL" id="AAF51961.1"/>
    </source>
</evidence>
<evidence type="ECO:0000312" key="12">
    <source>
        <dbReference type="FlyBase" id="FBgn0027497"/>
    </source>
</evidence>
<feature type="chain" id="PRO_0000351196" description="Nuclear receptor-binding protein homolog">
    <location>
        <begin position="1"/>
        <end position="637"/>
    </location>
</feature>
<feature type="domain" description="Protein kinase" evidence="4">
    <location>
        <begin position="109"/>
        <end position="375"/>
    </location>
</feature>
<feature type="region of interest" description="Disordered" evidence="5">
    <location>
        <begin position="1"/>
        <end position="60"/>
    </location>
</feature>
<feature type="region of interest" description="Disordered" evidence="5">
    <location>
        <begin position="74"/>
        <end position="99"/>
    </location>
</feature>
<feature type="region of interest" description="Disordered" evidence="5">
    <location>
        <begin position="465"/>
        <end position="489"/>
    </location>
</feature>
<feature type="region of interest" description="Disordered" evidence="5">
    <location>
        <begin position="617"/>
        <end position="637"/>
    </location>
</feature>
<feature type="compositionally biased region" description="Polar residues" evidence="5">
    <location>
        <begin position="1"/>
        <end position="14"/>
    </location>
</feature>
<feature type="compositionally biased region" description="Low complexity" evidence="5">
    <location>
        <begin position="36"/>
        <end position="46"/>
    </location>
</feature>
<feature type="compositionally biased region" description="Acidic residues" evidence="5">
    <location>
        <begin position="88"/>
        <end position="98"/>
    </location>
</feature>
<feature type="modified residue" description="Phosphoserine" evidence="8">
    <location>
        <position position="473"/>
    </location>
</feature>
<feature type="modified residue" description="Phosphoserine" evidence="8">
    <location>
        <position position="479"/>
    </location>
</feature>
<feature type="modified residue" description="Phosphoserine" evidence="8">
    <location>
        <position position="482"/>
    </location>
</feature>
<feature type="modified residue" description="Phosphothreonine" evidence="8">
    <location>
        <position position="484"/>
    </location>
</feature>
<name>NRBP_DROME</name>
<organism>
    <name type="scientific">Drosophila melanogaster</name>
    <name type="common">Fruit fly</name>
    <dbReference type="NCBI Taxonomy" id="7227"/>
    <lineage>
        <taxon>Eukaryota</taxon>
        <taxon>Metazoa</taxon>
        <taxon>Ecdysozoa</taxon>
        <taxon>Arthropoda</taxon>
        <taxon>Hexapoda</taxon>
        <taxon>Insecta</taxon>
        <taxon>Pterygota</taxon>
        <taxon>Neoptera</taxon>
        <taxon>Endopterygota</taxon>
        <taxon>Diptera</taxon>
        <taxon>Brachycera</taxon>
        <taxon>Muscomorpha</taxon>
        <taxon>Ephydroidea</taxon>
        <taxon>Drosophilidae</taxon>
        <taxon>Drosophila</taxon>
        <taxon>Sophophora</taxon>
    </lineage>
</organism>
<proteinExistence type="evidence at protein level"/>
<dbReference type="EMBL" id="AE014297">
    <property type="protein sequence ID" value="AAF51961.1"/>
    <property type="molecule type" value="Genomic_DNA"/>
</dbReference>
<dbReference type="EMBL" id="AF145690">
    <property type="protein sequence ID" value="AAD38665.1"/>
    <property type="molecule type" value="mRNA"/>
</dbReference>
<dbReference type="RefSeq" id="NP_001303420.1">
    <property type="nucleotide sequence ID" value="NM_001316491.1"/>
</dbReference>
<dbReference type="RefSeq" id="NP_649581.1">
    <property type="nucleotide sequence ID" value="NM_141324.3"/>
</dbReference>
<dbReference type="SMR" id="Q9Y0Y6"/>
<dbReference type="BioGRID" id="65915">
    <property type="interactions" value="8"/>
</dbReference>
<dbReference type="FunCoup" id="Q9Y0Y6">
    <property type="interactions" value="1987"/>
</dbReference>
<dbReference type="STRING" id="7227.FBpp0312573"/>
<dbReference type="GlyGen" id="Q9Y0Y6">
    <property type="glycosylation" value="1 site"/>
</dbReference>
<dbReference type="iPTMnet" id="Q9Y0Y6"/>
<dbReference type="PaxDb" id="7227-FBpp0078371"/>
<dbReference type="DNASU" id="40710"/>
<dbReference type="EnsemblMetazoa" id="FBtr0078722">
    <property type="protein sequence ID" value="FBpp0078371"/>
    <property type="gene ID" value="FBgn0027497"/>
</dbReference>
<dbReference type="EnsemblMetazoa" id="FBtr0347493">
    <property type="protein sequence ID" value="FBpp0312573"/>
    <property type="gene ID" value="FBgn0027497"/>
</dbReference>
<dbReference type="GeneID" id="40710"/>
<dbReference type="KEGG" id="dme:Dmel_CG1098"/>
<dbReference type="UCSC" id="CG1098-RA">
    <property type="organism name" value="d. melanogaster"/>
</dbReference>
<dbReference type="AGR" id="FB:FBgn0027497"/>
<dbReference type="CTD" id="40710"/>
<dbReference type="FlyBase" id="FBgn0027497">
    <property type="gene designation" value="Madm"/>
</dbReference>
<dbReference type="VEuPathDB" id="VectorBase:FBgn0027497"/>
<dbReference type="eggNOG" id="KOG1266">
    <property type="taxonomic scope" value="Eukaryota"/>
</dbReference>
<dbReference type="GeneTree" id="ENSGT00940000168773"/>
<dbReference type="HOGENOM" id="CLU_024273_0_0_1"/>
<dbReference type="InParanoid" id="Q9Y0Y6"/>
<dbReference type="OMA" id="NEVQYAQ"/>
<dbReference type="OrthoDB" id="1034557at2759"/>
<dbReference type="PhylomeDB" id="Q9Y0Y6"/>
<dbReference type="BioGRID-ORCS" id="40710">
    <property type="hits" value="0 hits in 3 CRISPR screens"/>
</dbReference>
<dbReference type="GenomeRNAi" id="40710"/>
<dbReference type="PRO" id="PR:Q9Y0Y6"/>
<dbReference type="Proteomes" id="UP000000803">
    <property type="component" value="Chromosome 3R"/>
</dbReference>
<dbReference type="Bgee" id="FBgn0027497">
    <property type="expression patterns" value="Expressed in spermatocyte cyst cell (Drosophila) in testis and 155 other cell types or tissues"/>
</dbReference>
<dbReference type="ExpressionAtlas" id="Q9Y0Y6">
    <property type="expression patterns" value="baseline and differential"/>
</dbReference>
<dbReference type="GO" id="GO:0005938">
    <property type="term" value="C:cell cortex"/>
    <property type="evidence" value="ECO:0007669"/>
    <property type="project" value="UniProtKB-SubCell"/>
</dbReference>
<dbReference type="GO" id="GO:0005737">
    <property type="term" value="C:cytoplasm"/>
    <property type="evidence" value="ECO:0000318"/>
    <property type="project" value="GO_Central"/>
</dbReference>
<dbReference type="GO" id="GO:0005829">
    <property type="term" value="C:cytosol"/>
    <property type="evidence" value="ECO:0000314"/>
    <property type="project" value="FlyBase"/>
</dbReference>
<dbReference type="GO" id="GO:0012505">
    <property type="term" value="C:endomembrane system"/>
    <property type="evidence" value="ECO:0000250"/>
    <property type="project" value="UniProtKB"/>
</dbReference>
<dbReference type="GO" id="GO:0005794">
    <property type="term" value="C:Golgi apparatus"/>
    <property type="evidence" value="ECO:0000314"/>
    <property type="project" value="FlyBase"/>
</dbReference>
<dbReference type="GO" id="GO:0005524">
    <property type="term" value="F:ATP binding"/>
    <property type="evidence" value="ECO:0007669"/>
    <property type="project" value="InterPro"/>
</dbReference>
<dbReference type="GO" id="GO:0042803">
    <property type="term" value="F:protein homodimerization activity"/>
    <property type="evidence" value="ECO:0000250"/>
    <property type="project" value="UniProtKB"/>
</dbReference>
<dbReference type="GO" id="GO:0006888">
    <property type="term" value="P:endoplasmic reticulum to Golgi vesicle-mediated transport"/>
    <property type="evidence" value="ECO:0000250"/>
    <property type="project" value="UniProtKB"/>
</dbReference>
<dbReference type="GO" id="GO:0036335">
    <property type="term" value="P:intestinal stem cell homeostasis"/>
    <property type="evidence" value="ECO:0000315"/>
    <property type="project" value="FlyBase"/>
</dbReference>
<dbReference type="GO" id="GO:0035556">
    <property type="term" value="P:intracellular signal transduction"/>
    <property type="evidence" value="ECO:0000318"/>
    <property type="project" value="GO_Central"/>
</dbReference>
<dbReference type="GO" id="GO:0009306">
    <property type="term" value="P:protein secretion"/>
    <property type="evidence" value="ECO:0000315"/>
    <property type="project" value="FlyBase"/>
</dbReference>
<dbReference type="GO" id="GO:0042127">
    <property type="term" value="P:regulation of cell population proliferation"/>
    <property type="evidence" value="ECO:0000314"/>
    <property type="project" value="FlyBase"/>
</dbReference>
<dbReference type="GO" id="GO:0008361">
    <property type="term" value="P:regulation of cell size"/>
    <property type="evidence" value="ECO:0000314"/>
    <property type="project" value="FlyBase"/>
</dbReference>
<dbReference type="CDD" id="cd13984">
    <property type="entry name" value="PK_NRBP1_like"/>
    <property type="match status" value="1"/>
</dbReference>
<dbReference type="FunFam" id="1.10.510.10:FF:000842">
    <property type="entry name" value="Nuclear receptor-binding protein"/>
    <property type="match status" value="1"/>
</dbReference>
<dbReference type="FunFam" id="3.30.200.20:FF:000098">
    <property type="entry name" value="Nuclear receptor-binding protein 1"/>
    <property type="match status" value="1"/>
</dbReference>
<dbReference type="Gene3D" id="3.30.200.20">
    <property type="entry name" value="Phosphorylase Kinase, domain 1"/>
    <property type="match status" value="1"/>
</dbReference>
<dbReference type="Gene3D" id="1.10.510.10">
    <property type="entry name" value="Transferase(Phosphotransferase) domain 1"/>
    <property type="match status" value="1"/>
</dbReference>
<dbReference type="InterPro" id="IPR011009">
    <property type="entry name" value="Kinase-like_dom_sf"/>
</dbReference>
<dbReference type="InterPro" id="IPR000719">
    <property type="entry name" value="Prot_kinase_dom"/>
</dbReference>
<dbReference type="InterPro" id="IPR001245">
    <property type="entry name" value="Ser-Thr/Tyr_kinase_cat_dom"/>
</dbReference>
<dbReference type="InterPro" id="IPR050588">
    <property type="entry name" value="WNK_Ser-Thr_kinase"/>
</dbReference>
<dbReference type="PANTHER" id="PTHR13902">
    <property type="entry name" value="SERINE/THREONINE-PROTEIN KINASE WNK WITH NO LYSINE -RELATED"/>
    <property type="match status" value="1"/>
</dbReference>
<dbReference type="Pfam" id="PF07714">
    <property type="entry name" value="PK_Tyr_Ser-Thr"/>
    <property type="match status" value="1"/>
</dbReference>
<dbReference type="SUPFAM" id="SSF56112">
    <property type="entry name" value="Protein kinase-like (PK-like)"/>
    <property type="match status" value="1"/>
</dbReference>
<dbReference type="PROSITE" id="PS50011">
    <property type="entry name" value="PROTEIN_KINASE_DOM"/>
    <property type="match status" value="1"/>
</dbReference>
<accession>Q9Y0Y6</accession>
<reference evidence="11" key="1">
    <citation type="journal article" date="2000" name="Science">
        <title>The genome sequence of Drosophila melanogaster.</title>
        <authorList>
            <person name="Adams M.D."/>
            <person name="Celniker S.E."/>
            <person name="Holt R.A."/>
            <person name="Evans C.A."/>
            <person name="Gocayne J.D."/>
            <person name="Amanatides P.G."/>
            <person name="Scherer S.E."/>
            <person name="Li P.W."/>
            <person name="Hoskins R.A."/>
            <person name="Galle R.F."/>
            <person name="George R.A."/>
            <person name="Lewis S.E."/>
            <person name="Richards S."/>
            <person name="Ashburner M."/>
            <person name="Henderson S.N."/>
            <person name="Sutton G.G."/>
            <person name="Wortman J.R."/>
            <person name="Yandell M.D."/>
            <person name="Zhang Q."/>
            <person name="Chen L.X."/>
            <person name="Brandon R.C."/>
            <person name="Rogers Y.-H.C."/>
            <person name="Blazej R.G."/>
            <person name="Champe M."/>
            <person name="Pfeiffer B.D."/>
            <person name="Wan K.H."/>
            <person name="Doyle C."/>
            <person name="Baxter E.G."/>
            <person name="Helt G."/>
            <person name="Nelson C.R."/>
            <person name="Miklos G.L.G."/>
            <person name="Abril J.F."/>
            <person name="Agbayani A."/>
            <person name="An H.-J."/>
            <person name="Andrews-Pfannkoch C."/>
            <person name="Baldwin D."/>
            <person name="Ballew R.M."/>
            <person name="Basu A."/>
            <person name="Baxendale J."/>
            <person name="Bayraktaroglu L."/>
            <person name="Beasley E.M."/>
            <person name="Beeson K.Y."/>
            <person name="Benos P.V."/>
            <person name="Berman B.P."/>
            <person name="Bhandari D."/>
            <person name="Bolshakov S."/>
            <person name="Borkova D."/>
            <person name="Botchan M.R."/>
            <person name="Bouck J."/>
            <person name="Brokstein P."/>
            <person name="Brottier P."/>
            <person name="Burtis K.C."/>
            <person name="Busam D.A."/>
            <person name="Butler H."/>
            <person name="Cadieu E."/>
            <person name="Center A."/>
            <person name="Chandra I."/>
            <person name="Cherry J.M."/>
            <person name="Cawley S."/>
            <person name="Dahlke C."/>
            <person name="Davenport L.B."/>
            <person name="Davies P."/>
            <person name="de Pablos B."/>
            <person name="Delcher A."/>
            <person name="Deng Z."/>
            <person name="Mays A.D."/>
            <person name="Dew I."/>
            <person name="Dietz S.M."/>
            <person name="Dodson K."/>
            <person name="Doup L.E."/>
            <person name="Downes M."/>
            <person name="Dugan-Rocha S."/>
            <person name="Dunkov B.C."/>
            <person name="Dunn P."/>
            <person name="Durbin K.J."/>
            <person name="Evangelista C.C."/>
            <person name="Ferraz C."/>
            <person name="Ferriera S."/>
            <person name="Fleischmann W."/>
            <person name="Fosler C."/>
            <person name="Gabrielian A.E."/>
            <person name="Garg N.S."/>
            <person name="Gelbart W.M."/>
            <person name="Glasser K."/>
            <person name="Glodek A."/>
            <person name="Gong F."/>
            <person name="Gorrell J.H."/>
            <person name="Gu Z."/>
            <person name="Guan P."/>
            <person name="Harris M."/>
            <person name="Harris N.L."/>
            <person name="Harvey D.A."/>
            <person name="Heiman T.J."/>
            <person name="Hernandez J.R."/>
            <person name="Houck J."/>
            <person name="Hostin D."/>
            <person name="Houston K.A."/>
            <person name="Howland T.J."/>
            <person name="Wei M.-H."/>
            <person name="Ibegwam C."/>
            <person name="Jalali M."/>
            <person name="Kalush F."/>
            <person name="Karpen G.H."/>
            <person name="Ke Z."/>
            <person name="Kennison J.A."/>
            <person name="Ketchum K.A."/>
            <person name="Kimmel B.E."/>
            <person name="Kodira C.D."/>
            <person name="Kraft C.L."/>
            <person name="Kravitz S."/>
            <person name="Kulp D."/>
            <person name="Lai Z."/>
            <person name="Lasko P."/>
            <person name="Lei Y."/>
            <person name="Levitsky A.A."/>
            <person name="Li J.H."/>
            <person name="Li Z."/>
            <person name="Liang Y."/>
            <person name="Lin X."/>
            <person name="Liu X."/>
            <person name="Mattei B."/>
            <person name="McIntosh T.C."/>
            <person name="McLeod M.P."/>
            <person name="McPherson D."/>
            <person name="Merkulov G."/>
            <person name="Milshina N.V."/>
            <person name="Mobarry C."/>
            <person name="Morris J."/>
            <person name="Moshrefi A."/>
            <person name="Mount S.M."/>
            <person name="Moy M."/>
            <person name="Murphy B."/>
            <person name="Murphy L."/>
            <person name="Muzny D.M."/>
            <person name="Nelson D.L."/>
            <person name="Nelson D.R."/>
            <person name="Nelson K.A."/>
            <person name="Nixon K."/>
            <person name="Nusskern D.R."/>
            <person name="Pacleb J.M."/>
            <person name="Palazzolo M."/>
            <person name="Pittman G.S."/>
            <person name="Pan S."/>
            <person name="Pollard J."/>
            <person name="Puri V."/>
            <person name="Reese M.G."/>
            <person name="Reinert K."/>
            <person name="Remington K."/>
            <person name="Saunders R.D.C."/>
            <person name="Scheeler F."/>
            <person name="Shen H."/>
            <person name="Shue B.C."/>
            <person name="Siden-Kiamos I."/>
            <person name="Simpson M."/>
            <person name="Skupski M.P."/>
            <person name="Smith T.J."/>
            <person name="Spier E."/>
            <person name="Spradling A.C."/>
            <person name="Stapleton M."/>
            <person name="Strong R."/>
            <person name="Sun E."/>
            <person name="Svirskas R."/>
            <person name="Tector C."/>
            <person name="Turner R."/>
            <person name="Venter E."/>
            <person name="Wang A.H."/>
            <person name="Wang X."/>
            <person name="Wang Z.-Y."/>
            <person name="Wassarman D.A."/>
            <person name="Weinstock G.M."/>
            <person name="Weissenbach J."/>
            <person name="Williams S.M."/>
            <person name="Woodage T."/>
            <person name="Worley K.C."/>
            <person name="Wu D."/>
            <person name="Yang S."/>
            <person name="Yao Q.A."/>
            <person name="Ye J."/>
            <person name="Yeh R.-F."/>
            <person name="Zaveri J.S."/>
            <person name="Zhan M."/>
            <person name="Zhang G."/>
            <person name="Zhao Q."/>
            <person name="Zheng L."/>
            <person name="Zheng X.H."/>
            <person name="Zhong F.N."/>
            <person name="Zhong W."/>
            <person name="Zhou X."/>
            <person name="Zhu S.C."/>
            <person name="Zhu X."/>
            <person name="Smith H.O."/>
            <person name="Gibbs R.A."/>
            <person name="Myers E.W."/>
            <person name="Rubin G.M."/>
            <person name="Venter J.C."/>
        </authorList>
    </citation>
    <scope>NUCLEOTIDE SEQUENCE [LARGE SCALE GENOMIC DNA]</scope>
    <source>
        <strain evidence="6">Berkeley</strain>
    </source>
</reference>
<reference evidence="9 11" key="2">
    <citation type="journal article" date="2002" name="Genome Biol.">
        <title>Annotation of the Drosophila melanogaster euchromatic genome: a systematic review.</title>
        <authorList>
            <person name="Misra S."/>
            <person name="Crosby M.A."/>
            <person name="Mungall C.J."/>
            <person name="Matthews B.B."/>
            <person name="Campbell K.S."/>
            <person name="Hradecky P."/>
            <person name="Huang Y."/>
            <person name="Kaminker J.S."/>
            <person name="Millburn G.H."/>
            <person name="Prochnik S.E."/>
            <person name="Smith C.D."/>
            <person name="Tupy J.L."/>
            <person name="Whitfield E.J."/>
            <person name="Bayraktaroglu L."/>
            <person name="Berman B.P."/>
            <person name="Bettencourt B.R."/>
            <person name="Celniker S.E."/>
            <person name="de Grey A.D.N.J."/>
            <person name="Drysdale R.A."/>
            <person name="Harris N.L."/>
            <person name="Richter J."/>
            <person name="Russo S."/>
            <person name="Schroeder A.J."/>
            <person name="Shu S.Q."/>
            <person name="Stapleton M."/>
            <person name="Yamada C."/>
            <person name="Ashburner M."/>
            <person name="Gelbart W.M."/>
            <person name="Rubin G.M."/>
            <person name="Lewis S.E."/>
        </authorList>
    </citation>
    <scope>GENOME REANNOTATION</scope>
    <source>
        <strain>Berkeley</strain>
    </source>
</reference>
<reference evidence="10" key="3">
    <citation type="journal article" date="2000" name="Science">
        <title>From sequence to chromosome: the tip of the X chromosome of D. melanogaster.</title>
        <authorList>
            <person name="Benos P.V."/>
            <person name="Gatt M.K."/>
            <person name="Ashburner M."/>
            <person name="Murphy L."/>
            <person name="Harris D."/>
            <person name="Barrell B.G."/>
            <person name="Ferraz C."/>
            <person name="Vidal S."/>
            <person name="Brun C."/>
            <person name="Demailles J."/>
            <person name="Cadieu E."/>
            <person name="Dreano S."/>
            <person name="Gloux S."/>
            <person name="Lelaure V."/>
            <person name="Mottier S."/>
            <person name="Galibert F."/>
            <person name="Borkova D."/>
            <person name="Minana B."/>
            <person name="Kafatos F.C."/>
            <person name="Louis C."/>
            <person name="Siden-Kiamos I."/>
            <person name="Bolshakov S."/>
            <person name="Papagiannakis G."/>
            <person name="Spanos L."/>
            <person name="Cox S."/>
            <person name="Madueno E."/>
            <person name="de Pablos B."/>
            <person name="Modolell J."/>
            <person name="Peter A."/>
            <person name="Schoettler P."/>
            <person name="Werner M."/>
            <person name="Mourkioti F."/>
            <person name="Beinert N."/>
            <person name="Dowe G."/>
            <person name="Schaefer U."/>
            <person name="Jaeckle H."/>
            <person name="Bucheton A."/>
            <person name="Callister D.M."/>
            <person name="Campbell L.A."/>
            <person name="Darlamitsou A."/>
            <person name="Henderson N.S."/>
            <person name="McMillan P.J."/>
            <person name="Salles C."/>
            <person name="Tait E.A."/>
            <person name="Valenti P."/>
            <person name="Saunders R.D.C."/>
            <person name="Glover D.M."/>
        </authorList>
    </citation>
    <scope>NUCLEOTIDE SEQUENCE [LARGE SCALE GENOMIC DNA]</scope>
    <source>
        <strain evidence="7">Oregon-R</strain>
    </source>
</reference>
<reference evidence="9" key="4">
    <citation type="journal article" date="2002" name="J. Biol. Chem.">
        <title>MADM, a novel adaptor protein that mediates phosphorylation of the 14-3-3 binding site of myeloid leukemia factor 1.</title>
        <authorList>
            <person name="Lim R."/>
            <person name="Winteringham L.N."/>
            <person name="Williams J.H."/>
            <person name="McCulloch R.K."/>
            <person name="Ingley E."/>
            <person name="Tiao J.Y.-H."/>
            <person name="Lalonde J.-P."/>
            <person name="Tsai S."/>
            <person name="Tilbrook P.A."/>
            <person name="Sun Y."/>
            <person name="Wu X."/>
            <person name="Morris S.W."/>
            <person name="Klinken S.P."/>
        </authorList>
    </citation>
    <scope>IDENTIFICATION</scope>
</reference>
<reference evidence="9" key="5">
    <citation type="journal article" date="2008" name="J. Proteome Res.">
        <title>Phosphoproteome analysis of Drosophila melanogaster embryos.</title>
        <authorList>
            <person name="Zhai B."/>
            <person name="Villen J."/>
            <person name="Beausoleil S.A."/>
            <person name="Mintseris J."/>
            <person name="Gygi S.P."/>
        </authorList>
    </citation>
    <scope>PHOSPHORYLATION [LARGE SCALE ANALYSIS] AT SER-473; SER-479; SER-482 AND THR-484</scope>
    <scope>IDENTIFICATION BY MASS SPECTROMETRY</scope>
    <source>
        <tissue evidence="8">Embryo</tissue>
    </source>
</reference>